<feature type="chain" id="PRO_1000203516" description="Phosphoserine aminotransferase">
    <location>
        <begin position="1"/>
        <end position="362"/>
    </location>
</feature>
<feature type="binding site" evidence="1">
    <location>
        <position position="42"/>
    </location>
    <ligand>
        <name>L-glutamate</name>
        <dbReference type="ChEBI" id="CHEBI:29985"/>
    </ligand>
</feature>
<feature type="binding site" evidence="1">
    <location>
        <begin position="76"/>
        <end position="77"/>
    </location>
    <ligand>
        <name>pyridoxal 5'-phosphate</name>
        <dbReference type="ChEBI" id="CHEBI:597326"/>
    </ligand>
</feature>
<feature type="binding site" evidence="1">
    <location>
        <position position="102"/>
    </location>
    <ligand>
        <name>pyridoxal 5'-phosphate</name>
        <dbReference type="ChEBI" id="CHEBI:597326"/>
    </ligand>
</feature>
<feature type="binding site" evidence="1">
    <location>
        <position position="154"/>
    </location>
    <ligand>
        <name>pyridoxal 5'-phosphate</name>
        <dbReference type="ChEBI" id="CHEBI:597326"/>
    </ligand>
</feature>
<feature type="binding site" evidence="1">
    <location>
        <position position="174"/>
    </location>
    <ligand>
        <name>pyridoxal 5'-phosphate</name>
        <dbReference type="ChEBI" id="CHEBI:597326"/>
    </ligand>
</feature>
<feature type="binding site" evidence="1">
    <location>
        <position position="197"/>
    </location>
    <ligand>
        <name>pyridoxal 5'-phosphate</name>
        <dbReference type="ChEBI" id="CHEBI:597326"/>
    </ligand>
</feature>
<feature type="binding site" evidence="1">
    <location>
        <begin position="239"/>
        <end position="240"/>
    </location>
    <ligand>
        <name>pyridoxal 5'-phosphate</name>
        <dbReference type="ChEBI" id="CHEBI:597326"/>
    </ligand>
</feature>
<feature type="modified residue" description="N6-(pyridoxal phosphate)lysine" evidence="1">
    <location>
        <position position="198"/>
    </location>
</feature>
<comment type="function">
    <text evidence="1">Catalyzes the reversible conversion of 3-phosphohydroxypyruvate to phosphoserine and of 3-hydroxy-2-oxo-4-phosphonooxybutanoate to phosphohydroxythreonine.</text>
</comment>
<comment type="catalytic activity">
    <reaction evidence="1">
        <text>O-phospho-L-serine + 2-oxoglutarate = 3-phosphooxypyruvate + L-glutamate</text>
        <dbReference type="Rhea" id="RHEA:14329"/>
        <dbReference type="ChEBI" id="CHEBI:16810"/>
        <dbReference type="ChEBI" id="CHEBI:18110"/>
        <dbReference type="ChEBI" id="CHEBI:29985"/>
        <dbReference type="ChEBI" id="CHEBI:57524"/>
        <dbReference type="EC" id="2.6.1.52"/>
    </reaction>
</comment>
<comment type="catalytic activity">
    <reaction evidence="1">
        <text>4-(phosphooxy)-L-threonine + 2-oxoglutarate = (R)-3-hydroxy-2-oxo-4-phosphooxybutanoate + L-glutamate</text>
        <dbReference type="Rhea" id="RHEA:16573"/>
        <dbReference type="ChEBI" id="CHEBI:16810"/>
        <dbReference type="ChEBI" id="CHEBI:29985"/>
        <dbReference type="ChEBI" id="CHEBI:58452"/>
        <dbReference type="ChEBI" id="CHEBI:58538"/>
        <dbReference type="EC" id="2.6.1.52"/>
    </reaction>
</comment>
<comment type="cofactor">
    <cofactor evidence="1">
        <name>pyridoxal 5'-phosphate</name>
        <dbReference type="ChEBI" id="CHEBI:597326"/>
    </cofactor>
    <text evidence="1">Binds 1 pyridoxal phosphate per subunit.</text>
</comment>
<comment type="pathway">
    <text evidence="1">Amino-acid biosynthesis; L-serine biosynthesis; L-serine from 3-phospho-D-glycerate: step 2/3.</text>
</comment>
<comment type="pathway">
    <text evidence="1">Cofactor biosynthesis; pyridoxine 5'-phosphate biosynthesis; pyridoxine 5'-phosphate from D-erythrose 4-phosphate: step 3/5.</text>
</comment>
<comment type="subunit">
    <text evidence="1">Homodimer.</text>
</comment>
<comment type="subcellular location">
    <subcellularLocation>
        <location evidence="1">Cytoplasm</location>
    </subcellularLocation>
</comment>
<comment type="similarity">
    <text evidence="1">Belongs to the class-V pyridoxal-phosphate-dependent aminotransferase family. SerC subfamily.</text>
</comment>
<keyword id="KW-0028">Amino-acid biosynthesis</keyword>
<keyword id="KW-0032">Aminotransferase</keyword>
<keyword id="KW-0963">Cytoplasm</keyword>
<keyword id="KW-0663">Pyridoxal phosphate</keyword>
<keyword id="KW-0664">Pyridoxine biosynthesis</keyword>
<keyword id="KW-1185">Reference proteome</keyword>
<keyword id="KW-0718">Serine biosynthesis</keyword>
<keyword id="KW-0808">Transferase</keyword>
<accession>Q057N5</accession>
<name>SERC_BUCCC</name>
<organism>
    <name type="scientific">Buchnera aphidicola subsp. Cinara cedri (strain Cc)</name>
    <dbReference type="NCBI Taxonomy" id="372461"/>
    <lineage>
        <taxon>Bacteria</taxon>
        <taxon>Pseudomonadati</taxon>
        <taxon>Pseudomonadota</taxon>
        <taxon>Gammaproteobacteria</taxon>
        <taxon>Enterobacterales</taxon>
        <taxon>Erwiniaceae</taxon>
        <taxon>Buchnera</taxon>
    </lineage>
</organism>
<proteinExistence type="inferred from homology"/>
<dbReference type="EC" id="2.6.1.52" evidence="1"/>
<dbReference type="EMBL" id="CP000263">
    <property type="protein sequence ID" value="ABJ90664.1"/>
    <property type="molecule type" value="Genomic_DNA"/>
</dbReference>
<dbReference type="RefSeq" id="WP_011672583.1">
    <property type="nucleotide sequence ID" value="NC_008513.1"/>
</dbReference>
<dbReference type="SMR" id="Q057N5"/>
<dbReference type="STRING" id="372461.BCc_192"/>
<dbReference type="KEGG" id="bcc:BCc_192"/>
<dbReference type="eggNOG" id="COG1932">
    <property type="taxonomic scope" value="Bacteria"/>
</dbReference>
<dbReference type="HOGENOM" id="CLU_034866_0_2_6"/>
<dbReference type="OrthoDB" id="9809412at2"/>
<dbReference type="UniPathway" id="UPA00135">
    <property type="reaction ID" value="UER00197"/>
</dbReference>
<dbReference type="UniPathway" id="UPA00244">
    <property type="reaction ID" value="UER00311"/>
</dbReference>
<dbReference type="Proteomes" id="UP000000669">
    <property type="component" value="Chromosome"/>
</dbReference>
<dbReference type="GO" id="GO:0005737">
    <property type="term" value="C:cytoplasm"/>
    <property type="evidence" value="ECO:0007669"/>
    <property type="project" value="UniProtKB-SubCell"/>
</dbReference>
<dbReference type="GO" id="GO:0004648">
    <property type="term" value="F:O-phospho-L-serine:2-oxoglutarate aminotransferase activity"/>
    <property type="evidence" value="ECO:0007669"/>
    <property type="project" value="UniProtKB-UniRule"/>
</dbReference>
<dbReference type="GO" id="GO:0030170">
    <property type="term" value="F:pyridoxal phosphate binding"/>
    <property type="evidence" value="ECO:0007669"/>
    <property type="project" value="UniProtKB-UniRule"/>
</dbReference>
<dbReference type="GO" id="GO:0006564">
    <property type="term" value="P:L-serine biosynthetic process"/>
    <property type="evidence" value="ECO:0007669"/>
    <property type="project" value="UniProtKB-UniRule"/>
</dbReference>
<dbReference type="GO" id="GO:0008615">
    <property type="term" value="P:pyridoxine biosynthetic process"/>
    <property type="evidence" value="ECO:0007669"/>
    <property type="project" value="UniProtKB-UniRule"/>
</dbReference>
<dbReference type="FunFam" id="3.40.640.10:FF:000010">
    <property type="entry name" value="Phosphoserine aminotransferase"/>
    <property type="match status" value="1"/>
</dbReference>
<dbReference type="FunFam" id="3.90.1150.10:FF:000006">
    <property type="entry name" value="Phosphoserine aminotransferase"/>
    <property type="match status" value="1"/>
</dbReference>
<dbReference type="Gene3D" id="3.90.1150.10">
    <property type="entry name" value="Aspartate Aminotransferase, domain 1"/>
    <property type="match status" value="1"/>
</dbReference>
<dbReference type="Gene3D" id="3.40.640.10">
    <property type="entry name" value="Type I PLP-dependent aspartate aminotransferase-like (Major domain)"/>
    <property type="match status" value="1"/>
</dbReference>
<dbReference type="HAMAP" id="MF_00160">
    <property type="entry name" value="SerC_aminotrans_5"/>
    <property type="match status" value="1"/>
</dbReference>
<dbReference type="InterPro" id="IPR000192">
    <property type="entry name" value="Aminotrans_V_dom"/>
</dbReference>
<dbReference type="InterPro" id="IPR020578">
    <property type="entry name" value="Aminotrans_V_PyrdxlP_BS"/>
</dbReference>
<dbReference type="InterPro" id="IPR022278">
    <property type="entry name" value="Pser_aminoTfrase"/>
</dbReference>
<dbReference type="InterPro" id="IPR015424">
    <property type="entry name" value="PyrdxlP-dep_Trfase"/>
</dbReference>
<dbReference type="InterPro" id="IPR015421">
    <property type="entry name" value="PyrdxlP-dep_Trfase_major"/>
</dbReference>
<dbReference type="InterPro" id="IPR015422">
    <property type="entry name" value="PyrdxlP-dep_Trfase_small"/>
</dbReference>
<dbReference type="NCBIfam" id="NF003764">
    <property type="entry name" value="PRK05355.1"/>
    <property type="match status" value="1"/>
</dbReference>
<dbReference type="NCBIfam" id="TIGR01364">
    <property type="entry name" value="serC_1"/>
    <property type="match status" value="1"/>
</dbReference>
<dbReference type="PANTHER" id="PTHR43247">
    <property type="entry name" value="PHOSPHOSERINE AMINOTRANSFERASE"/>
    <property type="match status" value="1"/>
</dbReference>
<dbReference type="PANTHER" id="PTHR43247:SF1">
    <property type="entry name" value="PHOSPHOSERINE AMINOTRANSFERASE"/>
    <property type="match status" value="1"/>
</dbReference>
<dbReference type="Pfam" id="PF00266">
    <property type="entry name" value="Aminotran_5"/>
    <property type="match status" value="1"/>
</dbReference>
<dbReference type="PIRSF" id="PIRSF000525">
    <property type="entry name" value="SerC"/>
    <property type="match status" value="1"/>
</dbReference>
<dbReference type="SUPFAM" id="SSF53383">
    <property type="entry name" value="PLP-dependent transferases"/>
    <property type="match status" value="1"/>
</dbReference>
<dbReference type="PROSITE" id="PS00595">
    <property type="entry name" value="AA_TRANSFER_CLASS_5"/>
    <property type="match status" value="1"/>
</dbReference>
<evidence type="ECO:0000255" key="1">
    <source>
        <dbReference type="HAMAP-Rule" id="MF_00160"/>
    </source>
</evidence>
<sequence length="362" mass="41793">MSKIYNFNPGPAMLPKEVLLEIKKNFLNWNNSGFSITEISHRSSSFIEFTIQVEKDLRNLLHIPENYNILFSHGGARGQFSAIPMNLIKKFKKPDYINSGYWSKCAAKEAKKYCEPNIINVKRYTKNKQKYIESPINWKITSKHTYLHYCPNETIEGIEIFEEPILLNKIIIGDFSSTILSRKINIKKYGMIYACAQKNIGPAGITIIIIRNDLLISCKKKIPSILDYQLLFKSKSMLNTPSIFSWYVSGLVFKWIKNLGGLNVIEKKNIKKAKILYKYLNSTNFYYNCILPSNQSRMNVTFNLYKNELTNFFIQESEKSGLYGLKGHSIIGGLRASIYNAMPIEGVKKLIQFMKNFEKKFG</sequence>
<reference key="1">
    <citation type="journal article" date="2006" name="Science">
        <title>A small microbial genome: the end of a long symbiotic relationship?</title>
        <authorList>
            <person name="Perez-Brocal V."/>
            <person name="Gil R."/>
            <person name="Ramos S."/>
            <person name="Lamelas A."/>
            <person name="Postigo M."/>
            <person name="Michelena J.M."/>
            <person name="Silva F.J."/>
            <person name="Moya A."/>
            <person name="Latorre A."/>
        </authorList>
    </citation>
    <scope>NUCLEOTIDE SEQUENCE [LARGE SCALE GENOMIC DNA]</scope>
    <source>
        <strain>Cc</strain>
    </source>
</reference>
<gene>
    <name evidence="1" type="primary">serC</name>
    <name type="ordered locus">BCc_192</name>
</gene>
<protein>
    <recommendedName>
        <fullName evidence="1">Phosphoserine aminotransferase</fullName>
        <ecNumber evidence="1">2.6.1.52</ecNumber>
    </recommendedName>
    <alternativeName>
        <fullName evidence="1">Phosphohydroxythreonine aminotransferase</fullName>
        <shortName evidence="1">PSAT</shortName>
    </alternativeName>
</protein>